<reference key="1">
    <citation type="submission" date="2005-08" db="EMBL/GenBank/DDBJ databases">
        <title>Identification of nerve growth factor as a ubiquitous component of Australian elapid snake venoms.</title>
        <authorList>
            <person name="Earl S.T.H."/>
            <person name="St Pierre L."/>
            <person name="Birrell G.W."/>
            <person name="Wallis T.P."/>
            <person name="Masci P.P."/>
            <person name="de Jersey J."/>
            <person name="Gorman J.J."/>
            <person name="Lavin M.F."/>
        </authorList>
    </citation>
    <scope>NUCLEOTIDE SEQUENCE [MRNA]</scope>
    <source>
        <tissue>Venom gland</tissue>
    </source>
</reference>
<proteinExistence type="evidence at transcript level"/>
<accession>Q3HXX6</accession>
<dbReference type="EMBL" id="DQ181919">
    <property type="protein sequence ID" value="ABA60131.1"/>
    <property type="molecule type" value="mRNA"/>
</dbReference>
<dbReference type="SMR" id="Q3HXX6"/>
<dbReference type="GO" id="GO:0030424">
    <property type="term" value="C:axon"/>
    <property type="evidence" value="ECO:0007669"/>
    <property type="project" value="TreeGrafter"/>
</dbReference>
<dbReference type="GO" id="GO:0030425">
    <property type="term" value="C:dendrite"/>
    <property type="evidence" value="ECO:0007669"/>
    <property type="project" value="TreeGrafter"/>
</dbReference>
<dbReference type="GO" id="GO:0005615">
    <property type="term" value="C:extracellular space"/>
    <property type="evidence" value="ECO:0007669"/>
    <property type="project" value="TreeGrafter"/>
</dbReference>
<dbReference type="GO" id="GO:0008021">
    <property type="term" value="C:synaptic vesicle"/>
    <property type="evidence" value="ECO:0007669"/>
    <property type="project" value="TreeGrafter"/>
</dbReference>
<dbReference type="GO" id="GO:0008083">
    <property type="term" value="F:growth factor activity"/>
    <property type="evidence" value="ECO:0007669"/>
    <property type="project" value="UniProtKB-KW"/>
</dbReference>
<dbReference type="GO" id="GO:0008289">
    <property type="term" value="F:lipid binding"/>
    <property type="evidence" value="ECO:0007669"/>
    <property type="project" value="UniProtKB-KW"/>
</dbReference>
<dbReference type="GO" id="GO:0008191">
    <property type="term" value="F:metalloendopeptidase inhibitor activity"/>
    <property type="evidence" value="ECO:0000250"/>
    <property type="project" value="UniProtKB"/>
</dbReference>
<dbReference type="GO" id="GO:0005163">
    <property type="term" value="F:nerve growth factor receptor binding"/>
    <property type="evidence" value="ECO:0007669"/>
    <property type="project" value="TreeGrafter"/>
</dbReference>
<dbReference type="GO" id="GO:0090729">
    <property type="term" value="F:toxin activity"/>
    <property type="evidence" value="ECO:0007669"/>
    <property type="project" value="UniProtKB-KW"/>
</dbReference>
<dbReference type="GO" id="GO:0007169">
    <property type="term" value="P:cell surface receptor protein tyrosine kinase signaling pathway"/>
    <property type="evidence" value="ECO:0007669"/>
    <property type="project" value="TreeGrafter"/>
</dbReference>
<dbReference type="GO" id="GO:0050804">
    <property type="term" value="P:modulation of chemical synaptic transmission"/>
    <property type="evidence" value="ECO:0007669"/>
    <property type="project" value="TreeGrafter"/>
</dbReference>
<dbReference type="GO" id="GO:0043524">
    <property type="term" value="P:negative regulation of neuron apoptotic process"/>
    <property type="evidence" value="ECO:0007669"/>
    <property type="project" value="TreeGrafter"/>
</dbReference>
<dbReference type="GO" id="GO:0021675">
    <property type="term" value="P:nerve development"/>
    <property type="evidence" value="ECO:0007669"/>
    <property type="project" value="TreeGrafter"/>
</dbReference>
<dbReference type="GO" id="GO:0038180">
    <property type="term" value="P:nerve growth factor signaling pathway"/>
    <property type="evidence" value="ECO:0007669"/>
    <property type="project" value="TreeGrafter"/>
</dbReference>
<dbReference type="GO" id="GO:0048812">
    <property type="term" value="P:neuron projection morphogenesis"/>
    <property type="evidence" value="ECO:0007669"/>
    <property type="project" value="TreeGrafter"/>
</dbReference>
<dbReference type="FunFam" id="2.10.90.10:FF:000002">
    <property type="entry name" value="Brain-derived neurotrophic factor"/>
    <property type="match status" value="1"/>
</dbReference>
<dbReference type="Gene3D" id="2.10.90.10">
    <property type="entry name" value="Cystine-knot cytokines"/>
    <property type="match status" value="1"/>
</dbReference>
<dbReference type="InterPro" id="IPR029034">
    <property type="entry name" value="Cystine-knot_cytokine"/>
</dbReference>
<dbReference type="InterPro" id="IPR020408">
    <property type="entry name" value="Nerve_growth_factor-like"/>
</dbReference>
<dbReference type="InterPro" id="IPR002072">
    <property type="entry name" value="Nerve_growth_factor-rel"/>
</dbReference>
<dbReference type="InterPro" id="IPR020425">
    <property type="entry name" value="Nerve_growth_factor_bsu"/>
</dbReference>
<dbReference type="InterPro" id="IPR019846">
    <property type="entry name" value="Nerve_growth_factor_CS"/>
</dbReference>
<dbReference type="InterPro" id="IPR020433">
    <property type="entry name" value="Venom_nerve_growth_factor"/>
</dbReference>
<dbReference type="PANTHER" id="PTHR11589:SF10">
    <property type="entry name" value="BETA-NERVE GROWTH FACTOR"/>
    <property type="match status" value="1"/>
</dbReference>
<dbReference type="PANTHER" id="PTHR11589">
    <property type="entry name" value="NERVE GROWTH FACTOR NGF -RELATED"/>
    <property type="match status" value="1"/>
</dbReference>
<dbReference type="Pfam" id="PF00243">
    <property type="entry name" value="NGF"/>
    <property type="match status" value="1"/>
</dbReference>
<dbReference type="PIRSF" id="PIRSF001789">
    <property type="entry name" value="NGF"/>
    <property type="match status" value="1"/>
</dbReference>
<dbReference type="PRINTS" id="PR00268">
    <property type="entry name" value="NGF"/>
</dbReference>
<dbReference type="PRINTS" id="PR01913">
    <property type="entry name" value="NGFBETA"/>
</dbReference>
<dbReference type="PRINTS" id="PR01917">
    <property type="entry name" value="VENOMNGF"/>
</dbReference>
<dbReference type="SMART" id="SM00140">
    <property type="entry name" value="NGF"/>
    <property type="match status" value="1"/>
</dbReference>
<dbReference type="SUPFAM" id="SSF57501">
    <property type="entry name" value="Cystine-knot cytokines"/>
    <property type="match status" value="1"/>
</dbReference>
<dbReference type="PROSITE" id="PS00248">
    <property type="entry name" value="NGF_1"/>
    <property type="match status" value="1"/>
</dbReference>
<dbReference type="PROSITE" id="PS50270">
    <property type="entry name" value="NGF_2"/>
    <property type="match status" value="1"/>
</dbReference>
<feature type="signal peptide" evidence="4">
    <location>
        <begin position="1"/>
        <end position="18"/>
    </location>
</feature>
<feature type="propeptide" id="PRO_0000043321" evidence="1">
    <location>
        <begin position="19"/>
        <end position="125"/>
    </location>
</feature>
<feature type="chain" id="PRO_0000043322" description="Venom nerve growth factor 3">
    <location>
        <begin position="126"/>
        <end position="243"/>
    </location>
</feature>
<feature type="region of interest" description="Disordered" evidence="5">
    <location>
        <begin position="47"/>
        <end position="67"/>
    </location>
</feature>
<feature type="compositionally biased region" description="Basic and acidic residues" evidence="5">
    <location>
        <begin position="47"/>
        <end position="66"/>
    </location>
</feature>
<feature type="glycosylation site" description="N-linked (GlcNAc...) asparagine" evidence="4">
    <location>
        <position position="148"/>
    </location>
</feature>
<feature type="glycosylation site" description="N-linked (GlcNAc...) asparagine" evidence="4">
    <location>
        <position position="151"/>
    </location>
</feature>
<feature type="disulfide bond" evidence="2">
    <location>
        <begin position="139"/>
        <end position="204"/>
    </location>
</feature>
<feature type="disulfide bond" evidence="2">
    <location>
        <begin position="182"/>
        <end position="232"/>
    </location>
</feature>
<feature type="disulfide bond" evidence="2">
    <location>
        <begin position="192"/>
        <end position="234"/>
    </location>
</feature>
<sequence length="243" mass="27467">MSMLCYTLIIAFLIGIWAAPKSEDNVPLGSPATSDLSDTSCAQTHEGLKTSRNTDQRHPAPKKAEDQELGSVANIIVDPKLFQKRRFQSSRVLFSTQPPPLSRDEQSVEFLDNEDALNRNIRAKRETHPVHNRGEHSVCDSISVWVANKTNATDIKGNMVTVMVDVNLNNEVYKQYFFETKCRNPNPVPSGCRGIDSRHWNSYCTTTQAYVRALTMEGNRASWRFIRIDTACVCVIIRKTDNF</sequence>
<comment type="function">
    <text evidence="2 3">Nerve growth factor is important for the development and maintenance of the sympathetic and sensory nervous systems. It stimulates division and differentiation of sympathetic and embryonic sensory neurons as well as basal forebrain cholinergic neurons in the brain. Its relevance in the snake venom is not clear. However, it has been shown to inhibit metalloproteinase-dependent proteolysis of platelet glycoprotein Ib alpha, suggesting a metalloproteinase inhibition to prevent metalloprotease autodigestion and/or protection against prey proteases (By similarity). Binds a lipid between the two protein chains in the homodimer. The lipid-bound form promotes histamine relase from mouse mast cells, contrary to the lipid-free form (By similarity).</text>
</comment>
<comment type="subunit">
    <text evidence="2">Homodimer; non-covalently linked.</text>
</comment>
<comment type="subcellular location">
    <subcellularLocation>
        <location evidence="2">Secreted</location>
    </subcellularLocation>
</comment>
<comment type="tissue specificity">
    <text>Expressed by the venom gland.</text>
</comment>
<comment type="similarity">
    <text evidence="6">Belongs to the NGF-beta family.</text>
</comment>
<evidence type="ECO:0000250" key="1"/>
<evidence type="ECO:0000250" key="2">
    <source>
        <dbReference type="UniProtKB" id="P61898"/>
    </source>
</evidence>
<evidence type="ECO:0000250" key="3">
    <source>
        <dbReference type="UniProtKB" id="P61899"/>
    </source>
</evidence>
<evidence type="ECO:0000255" key="4"/>
<evidence type="ECO:0000256" key="5">
    <source>
        <dbReference type="SAM" id="MobiDB-lite"/>
    </source>
</evidence>
<evidence type="ECO:0000305" key="6"/>
<name>NGFV3_TROCA</name>
<organism>
    <name type="scientific">Tropidechis carinatus</name>
    <name type="common">Australian rough-scaled snake</name>
    <dbReference type="NCBI Taxonomy" id="100989"/>
    <lineage>
        <taxon>Eukaryota</taxon>
        <taxon>Metazoa</taxon>
        <taxon>Chordata</taxon>
        <taxon>Craniata</taxon>
        <taxon>Vertebrata</taxon>
        <taxon>Euteleostomi</taxon>
        <taxon>Lepidosauria</taxon>
        <taxon>Squamata</taxon>
        <taxon>Bifurcata</taxon>
        <taxon>Unidentata</taxon>
        <taxon>Episquamata</taxon>
        <taxon>Toxicofera</taxon>
        <taxon>Serpentes</taxon>
        <taxon>Colubroidea</taxon>
        <taxon>Elapidae</taxon>
        <taxon>Notechinae</taxon>
        <taxon>Tropidechis</taxon>
    </lineage>
</organism>
<protein>
    <recommendedName>
        <fullName>Venom nerve growth factor 3</fullName>
        <shortName>v-NGF-3</shortName>
        <shortName>vNGF-3</shortName>
    </recommendedName>
</protein>
<keyword id="KW-0165">Cleavage on pair of basic residues</keyword>
<keyword id="KW-1015">Disulfide bond</keyword>
<keyword id="KW-0325">Glycoprotein</keyword>
<keyword id="KW-0339">Growth factor</keyword>
<keyword id="KW-0446">Lipid-binding</keyword>
<keyword id="KW-0481">Metalloenzyme inhibitor</keyword>
<keyword id="KW-0483">Metalloprotease inhibitor</keyword>
<keyword id="KW-0646">Protease inhibitor</keyword>
<keyword id="KW-0964">Secreted</keyword>
<keyword id="KW-0732">Signal</keyword>
<keyword id="KW-0800">Toxin</keyword>